<feature type="chain" id="PRO_0000089995" description="Aerobic cobaltochelatase subunit CobT">
    <location>
        <begin position="1"/>
        <end position="631"/>
    </location>
</feature>
<feature type="domain" description="VWFA" evidence="1">
    <location>
        <begin position="412"/>
        <end position="631"/>
    </location>
</feature>
<feature type="region of interest" description="Disordered" evidence="2">
    <location>
        <begin position="218"/>
        <end position="306"/>
    </location>
</feature>
<feature type="compositionally biased region" description="Acidic residues" evidence="2">
    <location>
        <begin position="222"/>
        <end position="235"/>
    </location>
</feature>
<feature type="compositionally biased region" description="Acidic residues" evidence="2">
    <location>
        <begin position="243"/>
        <end position="294"/>
    </location>
</feature>
<dbReference type="EC" id="6.6.1.2"/>
<dbReference type="EMBL" id="M62869">
    <property type="protein sequence ID" value="AAA25793.1"/>
    <property type="molecule type" value="Genomic_DNA"/>
</dbReference>
<dbReference type="KEGG" id="ag:AAA25793"/>
<dbReference type="BioCyc" id="MetaCyc:MONOMER-118"/>
<dbReference type="BRENDA" id="6.6.1.2">
    <property type="organism ID" value="5114"/>
</dbReference>
<dbReference type="UniPathway" id="UPA00148">
    <property type="reaction ID" value="UER00221"/>
</dbReference>
<dbReference type="GO" id="GO:0005737">
    <property type="term" value="C:cytoplasm"/>
    <property type="evidence" value="ECO:0007669"/>
    <property type="project" value="UniProtKB-SubCell"/>
</dbReference>
<dbReference type="GO" id="GO:0005524">
    <property type="term" value="F:ATP binding"/>
    <property type="evidence" value="ECO:0007669"/>
    <property type="project" value="UniProtKB-KW"/>
</dbReference>
<dbReference type="GO" id="GO:0051116">
    <property type="term" value="F:cobaltochelatase activity"/>
    <property type="evidence" value="ECO:0007669"/>
    <property type="project" value="UniProtKB-EC"/>
</dbReference>
<dbReference type="GO" id="GO:0009236">
    <property type="term" value="P:cobalamin biosynthetic process"/>
    <property type="evidence" value="ECO:0007669"/>
    <property type="project" value="UniProtKB-UniPathway"/>
</dbReference>
<dbReference type="GO" id="GO:0006779">
    <property type="term" value="P:porphyrin-containing compound biosynthetic process"/>
    <property type="evidence" value="ECO:0007669"/>
    <property type="project" value="UniProtKB-KW"/>
</dbReference>
<dbReference type="CDD" id="cd01454">
    <property type="entry name" value="vWA_norD_type"/>
    <property type="match status" value="1"/>
</dbReference>
<dbReference type="Gene3D" id="3.40.50.410">
    <property type="entry name" value="von Willebrand factor, type A domain"/>
    <property type="match status" value="1"/>
</dbReference>
<dbReference type="InterPro" id="IPR006538">
    <property type="entry name" value="CobT"/>
</dbReference>
<dbReference type="InterPro" id="IPR025861">
    <property type="entry name" value="CobT_VWA_dom"/>
</dbReference>
<dbReference type="InterPro" id="IPR051928">
    <property type="entry name" value="NorD/CobT"/>
</dbReference>
<dbReference type="InterPro" id="IPR002035">
    <property type="entry name" value="VWF_A"/>
</dbReference>
<dbReference type="InterPro" id="IPR036465">
    <property type="entry name" value="vWFA_dom_sf"/>
</dbReference>
<dbReference type="NCBIfam" id="TIGR01651">
    <property type="entry name" value="CobT"/>
    <property type="match status" value="1"/>
</dbReference>
<dbReference type="PANTHER" id="PTHR41248">
    <property type="entry name" value="NORD PROTEIN"/>
    <property type="match status" value="1"/>
</dbReference>
<dbReference type="PANTHER" id="PTHR41248:SF1">
    <property type="entry name" value="NORD PROTEIN"/>
    <property type="match status" value="1"/>
</dbReference>
<dbReference type="Pfam" id="PF06213">
    <property type="entry name" value="CobT"/>
    <property type="match status" value="1"/>
</dbReference>
<dbReference type="Pfam" id="PF11775">
    <property type="entry name" value="CobT_C"/>
    <property type="match status" value="1"/>
</dbReference>
<dbReference type="PIRSF" id="PIRSF031715">
    <property type="entry name" value="Cob_chel_CobT"/>
    <property type="match status" value="1"/>
</dbReference>
<dbReference type="SMART" id="SM00327">
    <property type="entry name" value="VWA"/>
    <property type="match status" value="1"/>
</dbReference>
<dbReference type="SUPFAM" id="SSF53300">
    <property type="entry name" value="vWA-like"/>
    <property type="match status" value="1"/>
</dbReference>
<dbReference type="PROSITE" id="PS50234">
    <property type="entry name" value="VWFA"/>
    <property type="match status" value="1"/>
</dbReference>
<organism>
    <name type="scientific">Sinorhizobium sp</name>
    <dbReference type="NCBI Taxonomy" id="42445"/>
    <lineage>
        <taxon>Bacteria</taxon>
        <taxon>Pseudomonadati</taxon>
        <taxon>Pseudomonadota</taxon>
        <taxon>Alphaproteobacteria</taxon>
        <taxon>Hyphomicrobiales</taxon>
        <taxon>Rhizobiaceae</taxon>
        <taxon>Sinorhizobium/Ensifer group</taxon>
        <taxon>Sinorhizobium</taxon>
    </lineage>
</organism>
<gene>
    <name type="primary">cobT</name>
</gene>
<comment type="function">
    <text>Catalyzes cobalt insertion in the corrin ring.</text>
</comment>
<comment type="catalytic activity">
    <reaction>
        <text>hydrogenobyrinate a,c-diamide + Co(2+) + ATP + H2O = cob(II)yrinate a,c diamide + ADP + phosphate + 5 H(+)</text>
        <dbReference type="Rhea" id="RHEA:15341"/>
        <dbReference type="ChEBI" id="CHEBI:15377"/>
        <dbReference type="ChEBI" id="CHEBI:15378"/>
        <dbReference type="ChEBI" id="CHEBI:30616"/>
        <dbReference type="ChEBI" id="CHEBI:43474"/>
        <dbReference type="ChEBI" id="CHEBI:48828"/>
        <dbReference type="ChEBI" id="CHEBI:58537"/>
        <dbReference type="ChEBI" id="CHEBI:77874"/>
        <dbReference type="ChEBI" id="CHEBI:456216"/>
        <dbReference type="EC" id="6.6.1.2"/>
    </reaction>
</comment>
<comment type="pathway">
    <text>Cofactor biosynthesis; adenosylcobalamin biosynthesis; cob(II)yrinate a,c-diamide from precorrin-2 (aerobic route): step 10/10.</text>
</comment>
<comment type="subunit">
    <text>Heterotrimer of CobN, CobS and CobT.</text>
</comment>
<comment type="subcellular location">
    <subcellularLocation>
        <location evidence="3">Cytoplasm</location>
    </subcellularLocation>
</comment>
<comment type="caution">
    <text evidence="3">Was originally thought to originate from Pseudomonas denitrificans, but similarity searches show that the sequence is much closer to Sinorhizobium. The entry's taxonomy has been changed.</text>
</comment>
<accession>P29934</accession>
<proteinExistence type="evidence at protein level"/>
<evidence type="ECO:0000255" key="1">
    <source>
        <dbReference type="PROSITE-ProRule" id="PRU00219"/>
    </source>
</evidence>
<evidence type="ECO:0000256" key="2">
    <source>
        <dbReference type="SAM" id="MobiDB-lite"/>
    </source>
</evidence>
<evidence type="ECO:0000305" key="3"/>
<keyword id="KW-0067">ATP-binding</keyword>
<keyword id="KW-0169">Cobalamin biosynthesis</keyword>
<keyword id="KW-0963">Cytoplasm</keyword>
<keyword id="KW-0436">Ligase</keyword>
<keyword id="KW-0547">Nucleotide-binding</keyword>
<keyword id="KW-0627">Porphyrin biosynthesis</keyword>
<name>COBT_SINSX</name>
<reference key="1">
    <citation type="journal article" date="1991" name="J. Bacteriol.">
        <title>Genetic and sequence analyses of a Pseudomonas denitrificans DNA fragment containing two cob genes.</title>
        <authorList>
            <person name="Cameron B."/>
            <person name="Guilhot C."/>
            <person name="Blanche F."/>
            <person name="Cauchois L."/>
            <person name="Rouyez M.-C."/>
            <person name="Rigault S."/>
            <person name="Levy-Schil S."/>
            <person name="Crouzet J."/>
        </authorList>
    </citation>
    <scope>NUCLEOTIDE SEQUENCE [GENOMIC DNA]</scope>
    <source>
        <strain>SC510</strain>
    </source>
</reference>
<reference key="2">
    <citation type="journal article" date="1992" name="J. Bacteriol.">
        <title>Assay, purification, and characterization of cobaltochelatase, a unique complex enzyme catalyzing cobalt insertion in hydrogenobyrinic acid a,c-diamide during coenzyme B12 biosynthesis in Pseudomonas denitrificans.</title>
        <authorList>
            <person name="Debussche L."/>
            <person name="Couder M."/>
            <person name="Thibaut D."/>
            <person name="Cameron B."/>
            <person name="Crouzet J."/>
            <person name="Blanche F."/>
        </authorList>
    </citation>
    <scope>CHARACTERIZATION</scope>
</reference>
<sequence length="631" mass="70367">MSSNSKAKPTTRENAAEPFKRALSGCIRSIAGDAEVEVAFANERPGMTGERIRLPELSKRPTLQELAVTRGLGDSMALRKACTHARIQRTMSPQGADARAIFDAVEQARVEAIGSLRMAGVAKNLNVMLEEKYAKANFATIERQADAPLGEAVALLVREKLTGQKPPASAGKVLDLWREFIEGKAAGDIEHLSSTINNQQAFARVVRDMLTSMEVAEKYGDDDNEPDEQESETDEDQPRSQEQDENASDEEAGDDAAPADENQAAEEQMEEGEMDGAEISDDDLQDEGDEDSETPGEVKRPNQPFADFNEKVDYAVFTREFDETIASEELCDEAELDRLRAFLDKQLAHLQGAVGRLANRLQRRLMAQQNRSWEFDLEEGYLDSARLQRIIIDPMQPLSFKREKDTNFRDTVVTLLIDNSGSMRGRPITVAATCADILARTLERCGVKVEILGFTTKAWKGGQSREKWLAGGKPQAPGRLNDLRHIVYKSADAPWRRARRNLGLMMREGLLKENIDGEALIWAHERLMARREQRRILMMISDGAPVDDSTLSVNPGNYLERHLRAVIEQIETRSPVELLAIGIGHDVTRYYRRAVTIVDADELAGAMTEQLAALFEDESQRRGSSRLRRAG</sequence>
<protein>
    <recommendedName>
        <fullName>Aerobic cobaltochelatase subunit CobT</fullName>
        <ecNumber>6.6.1.2</ecNumber>
    </recommendedName>
    <alternativeName>
        <fullName>Hydrogenobyrinic acid a,c-diamide cobaltochelatase subunit CobT</fullName>
    </alternativeName>
</protein>